<gene>
    <name evidence="5" type="primary">papA</name>
</gene>
<name>ADCS_STRPR</name>
<proteinExistence type="inferred from homology"/>
<reference key="1">
    <citation type="journal article" date="1997" name="Mol. Microbiol.">
        <title>Identification and analysis of genes from Streptomyces pristinaespiralis encoding enzymes involved in the biosynthesis of the 4-dimethylamino-L-phenylalanine precursor of pristinamycin I.</title>
        <authorList>
            <person name="Blanc V."/>
            <person name="Gil P."/>
            <person name="Bamas-Jacques N."/>
            <person name="Lorenzon S."/>
            <person name="Zagorec M."/>
            <person name="Schleuniger J."/>
            <person name="Bisch D."/>
            <person name="Blanche F."/>
            <person name="Debussche L."/>
            <person name="Crouzet J."/>
            <person name="Thibaut D."/>
        </authorList>
    </citation>
    <scope>NUCLEOTIDE SEQUENCE [GENOMIC DNA]</scope>
    <scope>FUNCTION</scope>
    <scope>PATHWAY</scope>
    <scope>DISRUPTION PHENOTYPE</scope>
    <source>
        <strain>SP92</strain>
    </source>
</reference>
<feature type="chain" id="PRO_0000453960" description="Aminodeoxychorismate synthase">
    <location>
        <begin position="1"/>
        <end position="719"/>
    </location>
</feature>
<feature type="domain" description="Glutamine amidotransferase type-1" evidence="2">
    <location>
        <begin position="5"/>
        <end position="199"/>
    </location>
</feature>
<feature type="region of interest" description="Disordered" evidence="3">
    <location>
        <begin position="199"/>
        <end position="224"/>
    </location>
</feature>
<feature type="compositionally biased region" description="Pro residues" evidence="3">
    <location>
        <begin position="209"/>
        <end position="224"/>
    </location>
</feature>
<feature type="active site" description="Nucleophile" evidence="2">
    <location>
        <position position="86"/>
    </location>
</feature>
<feature type="active site" evidence="2">
    <location>
        <position position="173"/>
    </location>
</feature>
<feature type="active site" evidence="2">
    <location>
        <position position="175"/>
    </location>
</feature>
<keyword id="KW-0045">Antibiotic biosynthesis</keyword>
<keyword id="KW-0315">Glutamine amidotransferase</keyword>
<keyword id="KW-0808">Transferase</keyword>
<comment type="function">
    <text evidence="1 4">Involved in pristinamycin I biosynthesis (PubMed:9044253). Catalyzes the biosynthesis of 4-amino-4-deoxychorismate (ADC) from chorismate and glutamine (By similarity).</text>
</comment>
<comment type="catalytic activity">
    <reaction evidence="1">
        <text>chorismate + L-glutamine = 4-amino-4-deoxychorismate + L-glutamate</text>
        <dbReference type="Rhea" id="RHEA:11672"/>
        <dbReference type="ChEBI" id="CHEBI:29748"/>
        <dbReference type="ChEBI" id="CHEBI:29985"/>
        <dbReference type="ChEBI" id="CHEBI:58359"/>
        <dbReference type="ChEBI" id="CHEBI:58406"/>
        <dbReference type="EC" id="2.6.1.85"/>
    </reaction>
    <physiologicalReaction direction="left-to-right" evidence="7">
        <dbReference type="Rhea" id="RHEA:11673"/>
    </physiologicalReaction>
</comment>
<comment type="pathway">
    <text evidence="4">Antibiotic biosynthesis.</text>
</comment>
<comment type="disruption phenotype">
    <text evidence="4">Disruption of the gene abolishes pristinamycin I biosynthesis.</text>
</comment>
<comment type="similarity">
    <text evidence="6">In the C-terminal section; belongs to the anthranilate synthase component I family.</text>
</comment>
<organism>
    <name type="scientific">Streptomyces pristinaespiralis</name>
    <dbReference type="NCBI Taxonomy" id="38300"/>
    <lineage>
        <taxon>Bacteria</taxon>
        <taxon>Bacillati</taxon>
        <taxon>Actinomycetota</taxon>
        <taxon>Actinomycetes</taxon>
        <taxon>Kitasatosporales</taxon>
        <taxon>Streptomycetaceae</taxon>
        <taxon>Streptomyces</taxon>
    </lineage>
</organism>
<evidence type="ECO:0000250" key="1">
    <source>
        <dbReference type="UniProtKB" id="Q8LPN3"/>
    </source>
</evidence>
<evidence type="ECO:0000255" key="2">
    <source>
        <dbReference type="PROSITE-ProRule" id="PRU00605"/>
    </source>
</evidence>
<evidence type="ECO:0000256" key="3">
    <source>
        <dbReference type="SAM" id="MobiDB-lite"/>
    </source>
</evidence>
<evidence type="ECO:0000269" key="4">
    <source>
    </source>
</evidence>
<evidence type="ECO:0000303" key="5">
    <source>
    </source>
</evidence>
<evidence type="ECO:0000305" key="6"/>
<evidence type="ECO:0000305" key="7">
    <source>
    </source>
</evidence>
<dbReference type="EC" id="2.6.1.85" evidence="1"/>
<dbReference type="EMBL" id="U60417">
    <property type="protein sequence ID" value="AAC44866.1"/>
    <property type="molecule type" value="Genomic_DNA"/>
</dbReference>
<dbReference type="SMR" id="P72539"/>
<dbReference type="MEROPS" id="C26.959"/>
<dbReference type="GO" id="GO:0005737">
    <property type="term" value="C:cytoplasm"/>
    <property type="evidence" value="ECO:0007669"/>
    <property type="project" value="TreeGrafter"/>
</dbReference>
<dbReference type="GO" id="GO:0046820">
    <property type="term" value="F:4-amino-4-deoxychorismate synthase activity"/>
    <property type="evidence" value="ECO:0007669"/>
    <property type="project" value="UniProtKB-EC"/>
</dbReference>
<dbReference type="GO" id="GO:0008153">
    <property type="term" value="P:4-aminobenzoate biosynthetic process"/>
    <property type="evidence" value="ECO:0007669"/>
    <property type="project" value="TreeGrafter"/>
</dbReference>
<dbReference type="GO" id="GO:0017000">
    <property type="term" value="P:antibiotic biosynthetic process"/>
    <property type="evidence" value="ECO:0007669"/>
    <property type="project" value="UniProtKB-KW"/>
</dbReference>
<dbReference type="GO" id="GO:0009396">
    <property type="term" value="P:folic acid-containing compound biosynthetic process"/>
    <property type="evidence" value="ECO:0007669"/>
    <property type="project" value="InterPro"/>
</dbReference>
<dbReference type="GO" id="GO:0000162">
    <property type="term" value="P:L-tryptophan biosynthetic process"/>
    <property type="evidence" value="ECO:0007669"/>
    <property type="project" value="TreeGrafter"/>
</dbReference>
<dbReference type="CDD" id="cd01743">
    <property type="entry name" value="GATase1_Anthranilate_Synthase"/>
    <property type="match status" value="1"/>
</dbReference>
<dbReference type="FunFam" id="3.40.50.880:FF:000003">
    <property type="entry name" value="Anthranilate synthase component II"/>
    <property type="match status" value="1"/>
</dbReference>
<dbReference type="Gene3D" id="3.40.50.880">
    <property type="match status" value="1"/>
</dbReference>
<dbReference type="Gene3D" id="3.60.120.10">
    <property type="entry name" value="Anthranilate synthase"/>
    <property type="match status" value="1"/>
</dbReference>
<dbReference type="InterPro" id="IPR005802">
    <property type="entry name" value="ADC_synth_comp_1"/>
</dbReference>
<dbReference type="InterPro" id="IPR005801">
    <property type="entry name" value="ADC_synthase"/>
</dbReference>
<dbReference type="InterPro" id="IPR019999">
    <property type="entry name" value="Anth_synth_I-like"/>
</dbReference>
<dbReference type="InterPro" id="IPR006805">
    <property type="entry name" value="Anth_synth_I_N"/>
</dbReference>
<dbReference type="InterPro" id="IPR015890">
    <property type="entry name" value="Chorismate_C"/>
</dbReference>
<dbReference type="InterPro" id="IPR029062">
    <property type="entry name" value="Class_I_gatase-like"/>
</dbReference>
<dbReference type="InterPro" id="IPR017926">
    <property type="entry name" value="GATASE"/>
</dbReference>
<dbReference type="InterPro" id="IPR006221">
    <property type="entry name" value="TrpG/PapA_dom"/>
</dbReference>
<dbReference type="NCBIfam" id="TIGR00553">
    <property type="entry name" value="pabB"/>
    <property type="match status" value="1"/>
</dbReference>
<dbReference type="NCBIfam" id="TIGR00566">
    <property type="entry name" value="trpG_papA"/>
    <property type="match status" value="1"/>
</dbReference>
<dbReference type="PANTHER" id="PTHR11236">
    <property type="entry name" value="AMINOBENZOATE/ANTHRANILATE SYNTHASE"/>
    <property type="match status" value="1"/>
</dbReference>
<dbReference type="PANTHER" id="PTHR11236:SF18">
    <property type="entry name" value="AMINODEOXYCHORISMATE SYNTHASE"/>
    <property type="match status" value="1"/>
</dbReference>
<dbReference type="Pfam" id="PF04715">
    <property type="entry name" value="Anth_synt_I_N"/>
    <property type="match status" value="1"/>
</dbReference>
<dbReference type="Pfam" id="PF00425">
    <property type="entry name" value="Chorismate_bind"/>
    <property type="match status" value="1"/>
</dbReference>
<dbReference type="Pfam" id="PF00117">
    <property type="entry name" value="GATase"/>
    <property type="match status" value="1"/>
</dbReference>
<dbReference type="PRINTS" id="PR00097">
    <property type="entry name" value="ANTSNTHASEII"/>
</dbReference>
<dbReference type="PRINTS" id="PR00099">
    <property type="entry name" value="CPSGATASE"/>
</dbReference>
<dbReference type="PRINTS" id="PR00096">
    <property type="entry name" value="GATASE"/>
</dbReference>
<dbReference type="SUPFAM" id="SSF56322">
    <property type="entry name" value="ADC synthase"/>
    <property type="match status" value="1"/>
</dbReference>
<dbReference type="SUPFAM" id="SSF52317">
    <property type="entry name" value="Class I glutamine amidotransferase-like"/>
    <property type="match status" value="1"/>
</dbReference>
<dbReference type="PROSITE" id="PS51273">
    <property type="entry name" value="GATASE_TYPE_1"/>
    <property type="match status" value="1"/>
</dbReference>
<protein>
    <recommendedName>
        <fullName evidence="6">Aminodeoxychorismate synthase</fullName>
        <shortName evidence="6">ADC synthase</shortName>
        <ecNumber evidence="1">2.6.1.85</ecNumber>
    </recommendedName>
    <alternativeName>
        <fullName evidence="6">4-amino-4-deoxychorismate synthase</fullName>
    </alternativeName>
</protein>
<accession>P72539</accession>
<sequence>MRTVRTLLIDNYDSFTYNLFQMLAEVNGAAPLVVRNDDTRTWQALAPGDFDNVVVSPGPGHPATDTDLGLSRRVITEWDLPLLGVCLGHQALCLLAGAAVVHAPEPFHGRTSDIRHDGQGLFANIPSPLTVVRYHSLTVRQLPADLRATAHTADGQLMAVAHRHLPRFGVQFHPESISSEHGHRMLANFRDLSLRAAGHRPPHTERIPAPAPAPAPAPAPAPPASAPVGEYRLHVREVACVPDADAAFTALFADAPARFWLDSSRVEPGLARFTFLGAPAGPLGEQITYDVADRAVRVKDGSGGETRRPGTLFDHLEHELAARALPATGLPFEFNLGYVGYLGYETKADSGGEDAHRGELPDGAFMFADRMLALDHEQGRAWLLALSSTRRPATAPAAERWLTDAARTLATTAPRPPFTLLPDDQLPALDVHYRHSLPRYRELVEECRRLITDGETYEVCLTNMLRVPGRIDPLTAYRALRTVSPAPYAAYLQFPGATVLSSSPERFLRIGADGWAESKPIKGTRPRGAGPAQDAAVKASLAAAEKDRSENLMIVDLVRNDLGQVCDIGSVHVPGLFEVETYATVHQLVSTVRGRLAADVSRPRAVRAAFPGGSMTGAPKVRTMQFIDRLEKGPRGVYSGALGYFALSGAADLSIVIRTIVATEEAATIGVGGAVVALSDPDDEVREMLLKAQTTLAALRQAHAGATASDRELLAGSLR</sequence>